<dbReference type="EC" id="3.1.1.85" evidence="1"/>
<dbReference type="EMBL" id="CP000103">
    <property type="protein sequence ID" value="ABB74434.1"/>
    <property type="molecule type" value="Genomic_DNA"/>
</dbReference>
<dbReference type="RefSeq" id="WP_011380475.1">
    <property type="nucleotide sequence ID" value="NC_007614.1"/>
</dbReference>
<dbReference type="SMR" id="Q2Y9Y7"/>
<dbReference type="STRING" id="323848.Nmul_A1131"/>
<dbReference type="ESTHER" id="nitmu-q2y9y7">
    <property type="family name" value="BioH"/>
</dbReference>
<dbReference type="KEGG" id="nmu:Nmul_A1131"/>
<dbReference type="eggNOG" id="COG2267">
    <property type="taxonomic scope" value="Bacteria"/>
</dbReference>
<dbReference type="HOGENOM" id="CLU_020336_12_2_4"/>
<dbReference type="OrthoDB" id="9798888at2"/>
<dbReference type="UniPathway" id="UPA00078"/>
<dbReference type="Proteomes" id="UP000002718">
    <property type="component" value="Chromosome"/>
</dbReference>
<dbReference type="GO" id="GO:0005737">
    <property type="term" value="C:cytoplasm"/>
    <property type="evidence" value="ECO:0007669"/>
    <property type="project" value="UniProtKB-SubCell"/>
</dbReference>
<dbReference type="GO" id="GO:0090499">
    <property type="term" value="F:pimelyl-[acyl-carrier protein] methyl ester esterase activity"/>
    <property type="evidence" value="ECO:0007669"/>
    <property type="project" value="UniProtKB-EC"/>
</dbReference>
<dbReference type="GO" id="GO:0009102">
    <property type="term" value="P:biotin biosynthetic process"/>
    <property type="evidence" value="ECO:0007669"/>
    <property type="project" value="UniProtKB-UniRule"/>
</dbReference>
<dbReference type="Gene3D" id="3.40.50.1820">
    <property type="entry name" value="alpha/beta hydrolase"/>
    <property type="match status" value="1"/>
</dbReference>
<dbReference type="HAMAP" id="MF_01260">
    <property type="entry name" value="Carboxylester"/>
    <property type="match status" value="1"/>
</dbReference>
<dbReference type="InterPro" id="IPR000073">
    <property type="entry name" value="AB_hydrolase_1"/>
</dbReference>
<dbReference type="InterPro" id="IPR029058">
    <property type="entry name" value="AB_hydrolase_fold"/>
</dbReference>
<dbReference type="InterPro" id="IPR010076">
    <property type="entry name" value="BioH"/>
</dbReference>
<dbReference type="InterPro" id="IPR050228">
    <property type="entry name" value="Carboxylesterase_BioH"/>
</dbReference>
<dbReference type="InterPro" id="IPR000639">
    <property type="entry name" value="Epox_hydrolase-like"/>
</dbReference>
<dbReference type="NCBIfam" id="TIGR01738">
    <property type="entry name" value="bioH"/>
    <property type="match status" value="1"/>
</dbReference>
<dbReference type="PANTHER" id="PTHR43194">
    <property type="entry name" value="HYDROLASE ALPHA/BETA FOLD FAMILY"/>
    <property type="match status" value="1"/>
</dbReference>
<dbReference type="PANTHER" id="PTHR43194:SF5">
    <property type="entry name" value="PIMELOYL-[ACYL-CARRIER PROTEIN] METHYL ESTER ESTERASE"/>
    <property type="match status" value="1"/>
</dbReference>
<dbReference type="Pfam" id="PF12697">
    <property type="entry name" value="Abhydrolase_6"/>
    <property type="match status" value="1"/>
</dbReference>
<dbReference type="PRINTS" id="PR00111">
    <property type="entry name" value="ABHYDROLASE"/>
</dbReference>
<dbReference type="PRINTS" id="PR00412">
    <property type="entry name" value="EPOXHYDRLASE"/>
</dbReference>
<dbReference type="SUPFAM" id="SSF53474">
    <property type="entry name" value="alpha/beta-Hydrolases"/>
    <property type="match status" value="1"/>
</dbReference>
<evidence type="ECO:0000255" key="1">
    <source>
        <dbReference type="HAMAP-Rule" id="MF_01260"/>
    </source>
</evidence>
<keyword id="KW-0093">Biotin biosynthesis</keyword>
<keyword id="KW-0963">Cytoplasm</keyword>
<keyword id="KW-0378">Hydrolase</keyword>
<keyword id="KW-1185">Reference proteome</keyword>
<keyword id="KW-0719">Serine esterase</keyword>
<organism>
    <name type="scientific">Nitrosospira multiformis (strain ATCC 25196 / NCIMB 11849 / C 71)</name>
    <dbReference type="NCBI Taxonomy" id="323848"/>
    <lineage>
        <taxon>Bacteria</taxon>
        <taxon>Pseudomonadati</taxon>
        <taxon>Pseudomonadota</taxon>
        <taxon>Betaproteobacteria</taxon>
        <taxon>Nitrosomonadales</taxon>
        <taxon>Nitrosomonadaceae</taxon>
        <taxon>Nitrosospira</taxon>
    </lineage>
</organism>
<gene>
    <name evidence="1" type="primary">bioH</name>
    <name type="ordered locus">Nmul_A1131</name>
</gene>
<sequence length="263" mass="29449">MGQVSLYVESLGEGPDLVLLHGWAMHSGMWGSTRRSLAQHFRLHLVDLPGHGFSRGALPYKRGEKNGVSEDMVERVVEVLPPDCVICGWSLGGQLAIELALREPARVEKIILTSTTPSFVKREDWQWGMEELTLKAFAENLRRDFSTTMKRFLTLQVSGGGDAGKVLPEMRRLLFERSAPEPEALEAGLQIVLANDLRGKLRNIVQPTLLIHGENDVIAHPEAAAWMKQQFQDVELAMLPNCSHVPFLSYPDKFIANIVRFAR</sequence>
<comment type="function">
    <text evidence="1">The physiological role of BioH is to remove the methyl group introduced by BioC when the pimeloyl moiety is complete. It allows to synthesize pimeloyl-ACP via the fatty acid synthetic pathway through the hydrolysis of the ester bonds of pimeloyl-ACP esters.</text>
</comment>
<comment type="catalytic activity">
    <reaction evidence="1">
        <text>6-carboxyhexanoyl-[ACP] methyl ester + H2O = 6-carboxyhexanoyl-[ACP] + methanol + H(+)</text>
        <dbReference type="Rhea" id="RHEA:42700"/>
        <dbReference type="Rhea" id="RHEA-COMP:9955"/>
        <dbReference type="Rhea" id="RHEA-COMP:10186"/>
        <dbReference type="ChEBI" id="CHEBI:15377"/>
        <dbReference type="ChEBI" id="CHEBI:15378"/>
        <dbReference type="ChEBI" id="CHEBI:17790"/>
        <dbReference type="ChEBI" id="CHEBI:78846"/>
        <dbReference type="ChEBI" id="CHEBI:82735"/>
        <dbReference type="EC" id="3.1.1.85"/>
    </reaction>
</comment>
<comment type="pathway">
    <text evidence="1">Cofactor biosynthesis; biotin biosynthesis.</text>
</comment>
<comment type="subunit">
    <text evidence="1">Monomer.</text>
</comment>
<comment type="subcellular location">
    <subcellularLocation>
        <location evidence="1">Cytoplasm</location>
    </subcellularLocation>
</comment>
<comment type="similarity">
    <text evidence="1">Belongs to the AB hydrolase superfamily. Carboxylesterase BioH family.</text>
</comment>
<reference key="1">
    <citation type="submission" date="2005-08" db="EMBL/GenBank/DDBJ databases">
        <title>Complete sequence of chromosome 1 of Nitrosospira multiformis ATCC 25196.</title>
        <authorList>
            <person name="Copeland A."/>
            <person name="Lucas S."/>
            <person name="Lapidus A."/>
            <person name="Barry K."/>
            <person name="Detter J.C."/>
            <person name="Glavina T."/>
            <person name="Hammon N."/>
            <person name="Israni S."/>
            <person name="Pitluck S."/>
            <person name="Chain P."/>
            <person name="Malfatti S."/>
            <person name="Shin M."/>
            <person name="Vergez L."/>
            <person name="Schmutz J."/>
            <person name="Larimer F."/>
            <person name="Land M."/>
            <person name="Hauser L."/>
            <person name="Kyrpides N."/>
            <person name="Lykidis A."/>
            <person name="Richardson P."/>
        </authorList>
    </citation>
    <scope>NUCLEOTIDE SEQUENCE [LARGE SCALE GENOMIC DNA]</scope>
    <source>
        <strain>ATCC 25196 / NCIMB 11849 / C 71</strain>
    </source>
</reference>
<proteinExistence type="inferred from homology"/>
<accession>Q2Y9Y7</accession>
<feature type="chain" id="PRO_1000067273" description="Pimeloyl-[acyl-carrier protein] methyl ester esterase">
    <location>
        <begin position="1"/>
        <end position="263"/>
    </location>
</feature>
<feature type="active site" description="Nucleophile" evidence="1">
    <location>
        <position position="90"/>
    </location>
</feature>
<feature type="active site" evidence="1">
    <location>
        <position position="216"/>
    </location>
</feature>
<feature type="active site" evidence="1">
    <location>
        <position position="244"/>
    </location>
</feature>
<feature type="binding site" evidence="1">
    <location>
        <position position="23"/>
    </location>
    <ligand>
        <name>substrate</name>
    </ligand>
</feature>
<feature type="binding site" evidence="1">
    <location>
        <begin position="90"/>
        <end position="91"/>
    </location>
    <ligand>
        <name>substrate</name>
    </ligand>
</feature>
<feature type="binding site" evidence="1">
    <location>
        <begin position="152"/>
        <end position="156"/>
    </location>
    <ligand>
        <name>substrate</name>
    </ligand>
</feature>
<feature type="binding site" evidence="1">
    <location>
        <position position="244"/>
    </location>
    <ligand>
        <name>substrate</name>
    </ligand>
</feature>
<protein>
    <recommendedName>
        <fullName evidence="1">Pimeloyl-[acyl-carrier protein] methyl ester esterase</fullName>
        <ecNumber evidence="1">3.1.1.85</ecNumber>
    </recommendedName>
    <alternativeName>
        <fullName evidence="1">Biotin synthesis protein BioH</fullName>
    </alternativeName>
    <alternativeName>
        <fullName evidence="1">Carboxylesterase BioH</fullName>
    </alternativeName>
</protein>
<name>BIOH_NITMU</name>